<sequence length="89" mass="10540">MAKKSKIAKERKREELVNKYYELRKELKAKGDYEALRKLPRDSSPTRLTRRCKVTGRPRGVLRKFEMSRIAFREHAHKGQIPGVKKSSW</sequence>
<accession>A5ISL8</accession>
<organism>
    <name type="scientific">Staphylococcus aureus (strain JH9)</name>
    <dbReference type="NCBI Taxonomy" id="359786"/>
    <lineage>
        <taxon>Bacteria</taxon>
        <taxon>Bacillati</taxon>
        <taxon>Bacillota</taxon>
        <taxon>Bacilli</taxon>
        <taxon>Bacillales</taxon>
        <taxon>Staphylococcaceae</taxon>
        <taxon>Staphylococcus</taxon>
    </lineage>
</organism>
<proteinExistence type="inferred from homology"/>
<reference key="1">
    <citation type="submission" date="2007-05" db="EMBL/GenBank/DDBJ databases">
        <title>Complete sequence of chromosome of Staphylococcus aureus subsp. aureus JH9.</title>
        <authorList>
            <consortium name="US DOE Joint Genome Institute"/>
            <person name="Copeland A."/>
            <person name="Lucas S."/>
            <person name="Lapidus A."/>
            <person name="Barry K."/>
            <person name="Detter J.C."/>
            <person name="Glavina del Rio T."/>
            <person name="Hammon N."/>
            <person name="Israni S."/>
            <person name="Pitluck S."/>
            <person name="Chain P."/>
            <person name="Malfatti S."/>
            <person name="Shin M."/>
            <person name="Vergez L."/>
            <person name="Schmutz J."/>
            <person name="Larimer F."/>
            <person name="Land M."/>
            <person name="Hauser L."/>
            <person name="Kyrpides N."/>
            <person name="Kim E."/>
            <person name="Tomasz A."/>
            <person name="Richardson P."/>
        </authorList>
    </citation>
    <scope>NUCLEOTIDE SEQUENCE [LARGE SCALE GENOMIC DNA]</scope>
    <source>
        <strain>JH9</strain>
    </source>
</reference>
<dbReference type="EMBL" id="CP000703">
    <property type="protein sequence ID" value="ABQ49191.1"/>
    <property type="molecule type" value="Genomic_DNA"/>
</dbReference>
<dbReference type="RefSeq" id="WP_001085655.1">
    <property type="nucleotide sequence ID" value="NC_009487.1"/>
</dbReference>
<dbReference type="SMR" id="A5ISL8"/>
<dbReference type="GeneID" id="98345705"/>
<dbReference type="KEGG" id="saj:SaurJH9_1397"/>
<dbReference type="HOGENOM" id="CLU_139869_0_0_9"/>
<dbReference type="GO" id="GO:0005737">
    <property type="term" value="C:cytoplasm"/>
    <property type="evidence" value="ECO:0007669"/>
    <property type="project" value="UniProtKB-ARBA"/>
</dbReference>
<dbReference type="GO" id="GO:0015935">
    <property type="term" value="C:small ribosomal subunit"/>
    <property type="evidence" value="ECO:0007669"/>
    <property type="project" value="TreeGrafter"/>
</dbReference>
<dbReference type="GO" id="GO:0019843">
    <property type="term" value="F:rRNA binding"/>
    <property type="evidence" value="ECO:0007669"/>
    <property type="project" value="UniProtKB-UniRule"/>
</dbReference>
<dbReference type="GO" id="GO:0003735">
    <property type="term" value="F:structural constituent of ribosome"/>
    <property type="evidence" value="ECO:0007669"/>
    <property type="project" value="InterPro"/>
</dbReference>
<dbReference type="GO" id="GO:0006412">
    <property type="term" value="P:translation"/>
    <property type="evidence" value="ECO:0007669"/>
    <property type="project" value="UniProtKB-UniRule"/>
</dbReference>
<dbReference type="FunFam" id="4.10.830.10:FF:000003">
    <property type="entry name" value="30S ribosomal protein S14"/>
    <property type="match status" value="1"/>
</dbReference>
<dbReference type="Gene3D" id="4.10.830.10">
    <property type="entry name" value="30s Ribosomal Protein S14, Chain N"/>
    <property type="match status" value="1"/>
</dbReference>
<dbReference type="HAMAP" id="MF_00537">
    <property type="entry name" value="Ribosomal_uS14_1"/>
    <property type="match status" value="1"/>
</dbReference>
<dbReference type="InterPro" id="IPR001209">
    <property type="entry name" value="Ribosomal_uS14"/>
</dbReference>
<dbReference type="InterPro" id="IPR023036">
    <property type="entry name" value="Ribosomal_uS14_bac/plastid"/>
</dbReference>
<dbReference type="InterPro" id="IPR018271">
    <property type="entry name" value="Ribosomal_uS14_CS"/>
</dbReference>
<dbReference type="InterPro" id="IPR043140">
    <property type="entry name" value="Ribosomal_uS14_sf"/>
</dbReference>
<dbReference type="NCBIfam" id="NF006477">
    <property type="entry name" value="PRK08881.1"/>
    <property type="match status" value="1"/>
</dbReference>
<dbReference type="PANTHER" id="PTHR19836">
    <property type="entry name" value="30S RIBOSOMAL PROTEIN S14"/>
    <property type="match status" value="1"/>
</dbReference>
<dbReference type="PANTHER" id="PTHR19836:SF19">
    <property type="entry name" value="SMALL RIBOSOMAL SUBUNIT PROTEIN US14M"/>
    <property type="match status" value="1"/>
</dbReference>
<dbReference type="Pfam" id="PF00253">
    <property type="entry name" value="Ribosomal_S14"/>
    <property type="match status" value="1"/>
</dbReference>
<dbReference type="SUPFAM" id="SSF57716">
    <property type="entry name" value="Glucocorticoid receptor-like (DNA-binding domain)"/>
    <property type="match status" value="1"/>
</dbReference>
<dbReference type="PROSITE" id="PS00527">
    <property type="entry name" value="RIBOSOMAL_S14"/>
    <property type="match status" value="1"/>
</dbReference>
<keyword id="KW-0687">Ribonucleoprotein</keyword>
<keyword id="KW-0689">Ribosomal protein</keyword>
<keyword id="KW-0694">RNA-binding</keyword>
<keyword id="KW-0699">rRNA-binding</keyword>
<feature type="chain" id="PRO_1000128600" description="Small ribosomal subunit protein uS14A">
    <location>
        <begin position="1"/>
        <end position="89"/>
    </location>
</feature>
<evidence type="ECO:0000255" key="1">
    <source>
        <dbReference type="HAMAP-Rule" id="MF_00537"/>
    </source>
</evidence>
<evidence type="ECO:0000305" key="2"/>
<gene>
    <name evidence="1" type="primary">rpsN</name>
    <name type="ordered locus">SaurJH9_1397</name>
</gene>
<protein>
    <recommendedName>
        <fullName evidence="1">Small ribosomal subunit protein uS14A</fullName>
    </recommendedName>
    <alternativeName>
        <fullName evidence="2">30S ribosomal protein S14</fullName>
    </alternativeName>
</protein>
<comment type="function">
    <text evidence="1">Binds 16S rRNA, required for the assembly of 30S particles and may also be responsible for determining the conformation of the 16S rRNA at the A site.</text>
</comment>
<comment type="subunit">
    <text evidence="1">Part of the 30S ribosomal subunit. Contacts proteins S3 and S10.</text>
</comment>
<comment type="similarity">
    <text evidence="1">Belongs to the universal ribosomal protein uS14 family.</text>
</comment>
<name>RS14_STAA9</name>